<protein>
    <recommendedName>
        <fullName evidence="6">Endonuclease CUE2</fullName>
    </recommendedName>
    <alternativeName>
        <fullName>Coupling of ubiquitin conjugation to ER degradation protein 2</fullName>
    </alternativeName>
</protein>
<keyword id="KW-0002">3D-structure</keyword>
<keyword id="KW-1185">Reference proteome</keyword>
<keyword id="KW-0677">Repeat</keyword>
<keyword id="KW-0833">Ubl conjugation pathway</keyword>
<comment type="function">
    <text evidence="3 4">mRNA endonuclease involved in the No-Go Decay (NGD) pathway, which catalyzes mRNA cleavage and degradation in response to ribosome collisions (PubMed:31219035, PubMed:36583309). Acts downstream of the ribosome collision sensor HEL2 (PubMed:36583309). Specifically recognizes and binds RPS7/eS7 polyubiquitinated by MOT2/NOT4 and HEL2, promoting CUE2 recruitment to stalled ribosomes, where it mediates mRNA cleavage upstream of the colliding ribosome (PubMed:36583309). Also mediates mRNA cleavage within colliding ribosomes: recruited to colliding ribosomes downstream of the RQT (ribosome quality control trigger) complex following disassembly of stalled ribosomes and cleaves mRNAs partially released from the colliding ribosome (PubMed:36583309).</text>
</comment>
<comment type="domain">
    <text evidence="4">The CUE domains specifically bind RPS7/eS7 polyubiquitinated by MOT2/NOT4 and HEL2.</text>
</comment>
<accession>P36075</accession>
<accession>D6VXJ8</accession>
<name>CUE2_YEAST</name>
<organism>
    <name type="scientific">Saccharomyces cerevisiae (strain ATCC 204508 / S288c)</name>
    <name type="common">Baker's yeast</name>
    <dbReference type="NCBI Taxonomy" id="559292"/>
    <lineage>
        <taxon>Eukaryota</taxon>
        <taxon>Fungi</taxon>
        <taxon>Dikarya</taxon>
        <taxon>Ascomycota</taxon>
        <taxon>Saccharomycotina</taxon>
        <taxon>Saccharomycetes</taxon>
        <taxon>Saccharomycetales</taxon>
        <taxon>Saccharomycetaceae</taxon>
        <taxon>Saccharomyces</taxon>
    </lineage>
</organism>
<sequence length="443" mass="50874">MSMDNNDDHESKLSILMDMFPAISKSKLQVHLLENNNDLDLTIGLLLKENDDKSTVDNELHQLYDMFPQLDCSVIKDQFVINEKSVESTISDLLNYETLQKLKDNQANSPDSVKRNEKKNNWESTNDHIESIIKFTDAPKNIAQEYLAENGFDTVKAIIKIILDYYDKRDFKKDVDTFKVKRSPNTTVRGGRVQSSTGLAHVLKKGKESANVAQESLKRPRSYKHSLDSPQMVELNELVADNRDLKAINHEFLQKCLQFYDGDVVKVLNISSLLIEDDKNITKTWNFDEGFTLTSRDNCKQHLPKFSTPQISRRNEVGNTYKLPLHDKETPEGAVPVINNLFQTYRLDFHGFLPSEAVSTLKLALNKWWSKEVAERELNSHNINSYGSKVQFVSPLIVVTGRGIHSIGGISKVRLQVKSFLEKNHYIFWEESSYFRIEGKKKK</sequence>
<proteinExistence type="evidence at protein level"/>
<gene>
    <name evidence="5 7" type="primary">CUE2</name>
    <name type="ordered locus">YKL090W</name>
</gene>
<feature type="chain" id="PRO_0000079558" description="Endonuclease CUE2">
    <location>
        <begin position="1"/>
        <end position="443"/>
    </location>
</feature>
<feature type="domain" description="CUE 1" evidence="2">
    <location>
        <begin position="8"/>
        <end position="51"/>
    </location>
</feature>
<feature type="domain" description="CUE 2" evidence="2">
    <location>
        <begin position="55"/>
        <end position="98"/>
    </location>
</feature>
<feature type="domain" description="Smr" evidence="1">
    <location>
        <begin position="347"/>
        <end position="443"/>
    </location>
</feature>
<feature type="mutagenesis site" description="In CUE-D1 mutant; impaired ability to bind polyubiquitinated RPS7/eS7; when associated with 46-A-A-47." evidence="4">
    <original>FP</original>
    <variation>AA</variation>
    <location>
        <begin position="20"/>
        <end position="21"/>
    </location>
</feature>
<feature type="mutagenesis site" description="In CUE-D1 mutant; impaired ability to bind polyubiquitinated RPS7/eS7; when associated with 21-A-A-22." evidence="4">
    <original>LL</original>
    <variation>AA</variation>
    <location>
        <begin position="46"/>
        <end position="47"/>
    </location>
</feature>
<feature type="mutagenesis site" description="In CUE-D2 mutant; impaired ability to bind polyubiquitinated RPS7/eS7; when associated with 93-A-A-94." evidence="4">
    <original>FP</original>
    <variation>AA</variation>
    <location>
        <begin position="67"/>
        <end position="68"/>
    </location>
</feature>
<feature type="mutagenesis site" description="In CUE-D2 mutant; impaired ability to bind polyubiquitinated RPS7/eS7; when associated with 66-A-A-67." evidence="4">
    <original>LL</original>
    <variation>AA</variation>
    <location>
        <begin position="93"/>
        <end position="94"/>
    </location>
</feature>
<feature type="mutagenesis site" description="Abolished ability to act downstream of the RQT (ribosome quality control trigger) complex." evidence="4">
    <original>W</original>
    <variation>A</variation>
    <location>
        <position position="122"/>
    </location>
</feature>
<feature type="mutagenesis site" description="Abolished mRNA endonuclease activity." evidence="3">
    <original>DFH</original>
    <variation>AAA</variation>
    <location>
        <begin position="348"/>
        <end position="350"/>
    </location>
</feature>
<feature type="mutagenesis site" description="Decreased ability to participate to No-Go Decay (NGD) pathway in response to ribosome collision." evidence="3">
    <original>R</original>
    <variation>A</variation>
    <location>
        <position position="402"/>
    </location>
</feature>
<feature type="mutagenesis site" description="No effect." evidence="3">
    <original>R</original>
    <variation>K</variation>
    <location>
        <position position="402"/>
    </location>
</feature>
<feature type="helix" evidence="8">
    <location>
        <begin position="9"/>
        <end position="19"/>
    </location>
</feature>
<feature type="strand" evidence="8">
    <location>
        <begin position="21"/>
        <end position="23"/>
    </location>
</feature>
<feature type="helix" evidence="8">
    <location>
        <begin position="25"/>
        <end position="34"/>
    </location>
</feature>
<feature type="turn" evidence="8">
    <location>
        <begin position="35"/>
        <end position="37"/>
    </location>
</feature>
<feature type="helix" evidence="8">
    <location>
        <begin position="40"/>
        <end position="49"/>
    </location>
</feature>
<dbReference type="EMBL" id="Z28090">
    <property type="protein sequence ID" value="CAA81928.1"/>
    <property type="molecule type" value="Genomic_DNA"/>
</dbReference>
<dbReference type="EMBL" id="BK006944">
    <property type="protein sequence ID" value="DAA09068.1"/>
    <property type="molecule type" value="Genomic_DNA"/>
</dbReference>
<dbReference type="PIR" id="S37915">
    <property type="entry name" value="S37915"/>
</dbReference>
<dbReference type="RefSeq" id="NP_012833.1">
    <property type="nucleotide sequence ID" value="NM_001179656.1"/>
</dbReference>
<dbReference type="PDB" id="1OTR">
    <property type="method" value="NMR"/>
    <property type="chains" value="A=6-54"/>
</dbReference>
<dbReference type="PDBsum" id="1OTR"/>
<dbReference type="SMR" id="P36075"/>
<dbReference type="BioGRID" id="34043">
    <property type="interactions" value="34"/>
</dbReference>
<dbReference type="DIP" id="DIP-1917N"/>
<dbReference type="FunCoup" id="P36075">
    <property type="interactions" value="29"/>
</dbReference>
<dbReference type="IntAct" id="P36075">
    <property type="interactions" value="5"/>
</dbReference>
<dbReference type="MINT" id="P36075"/>
<dbReference type="STRING" id="4932.YKL090W"/>
<dbReference type="iPTMnet" id="P36075"/>
<dbReference type="PaxDb" id="4932-YKL090W"/>
<dbReference type="PeptideAtlas" id="P36075"/>
<dbReference type="EnsemblFungi" id="YKL090W_mRNA">
    <property type="protein sequence ID" value="YKL090W"/>
    <property type="gene ID" value="YKL090W"/>
</dbReference>
<dbReference type="GeneID" id="853772"/>
<dbReference type="KEGG" id="sce:YKL090W"/>
<dbReference type="AGR" id="SGD:S000001573"/>
<dbReference type="SGD" id="S000001573">
    <property type="gene designation" value="CUE2"/>
</dbReference>
<dbReference type="VEuPathDB" id="FungiDB:YKL090W"/>
<dbReference type="eggNOG" id="KOG2401">
    <property type="taxonomic scope" value="Eukaryota"/>
</dbReference>
<dbReference type="HOGENOM" id="CLU_590497_0_0_1"/>
<dbReference type="InParanoid" id="P36075"/>
<dbReference type="OMA" id="NDDHESK"/>
<dbReference type="OrthoDB" id="4080456at2759"/>
<dbReference type="BioCyc" id="YEAST:G3O-31881-MONOMER"/>
<dbReference type="BioGRID-ORCS" id="853772">
    <property type="hits" value="1 hit in 10 CRISPR screens"/>
</dbReference>
<dbReference type="PRO" id="PR:P36075"/>
<dbReference type="Proteomes" id="UP000002311">
    <property type="component" value="Chromosome XI"/>
</dbReference>
<dbReference type="RNAct" id="P36075">
    <property type="molecule type" value="protein"/>
</dbReference>
<dbReference type="GO" id="GO:0022626">
    <property type="term" value="C:cytosolic ribosome"/>
    <property type="evidence" value="ECO:0000314"/>
    <property type="project" value="UniProt"/>
</dbReference>
<dbReference type="GO" id="GO:0004519">
    <property type="term" value="F:endonuclease activity"/>
    <property type="evidence" value="ECO:0000314"/>
    <property type="project" value="SGD"/>
</dbReference>
<dbReference type="GO" id="GO:0070530">
    <property type="term" value="F:K63-linked polyubiquitin modification-dependent protein binding"/>
    <property type="evidence" value="ECO:0000304"/>
    <property type="project" value="UniProt"/>
</dbReference>
<dbReference type="GO" id="GO:0031593">
    <property type="term" value="F:polyubiquitin modification-dependent protein binding"/>
    <property type="evidence" value="ECO:0000314"/>
    <property type="project" value="UniProtKB"/>
</dbReference>
<dbReference type="GO" id="GO:0004521">
    <property type="term" value="F:RNA endonuclease activity"/>
    <property type="evidence" value="ECO:0000314"/>
    <property type="project" value="UniProtKB"/>
</dbReference>
<dbReference type="GO" id="GO:0043130">
    <property type="term" value="F:ubiquitin binding"/>
    <property type="evidence" value="ECO:0000314"/>
    <property type="project" value="SGD"/>
</dbReference>
<dbReference type="GO" id="GO:0070966">
    <property type="term" value="P:nuclear-transcribed mRNA catabolic process, no-go decay"/>
    <property type="evidence" value="ECO:0000314"/>
    <property type="project" value="SGD"/>
</dbReference>
<dbReference type="GO" id="GO:0072344">
    <property type="term" value="P:rescue of stalled ribosome"/>
    <property type="evidence" value="ECO:0000314"/>
    <property type="project" value="UniProtKB"/>
</dbReference>
<dbReference type="CDD" id="cd14374">
    <property type="entry name" value="CUE1_Cue2p_like"/>
    <property type="match status" value="1"/>
</dbReference>
<dbReference type="CDD" id="cd14375">
    <property type="entry name" value="CUE2_Cue2p_like"/>
    <property type="match status" value="1"/>
</dbReference>
<dbReference type="FunFam" id="1.10.8.10:FF:000132">
    <property type="entry name" value="RBR-type E3 ubiquitin transferase"/>
    <property type="match status" value="1"/>
</dbReference>
<dbReference type="Gene3D" id="3.30.1370.110">
    <property type="match status" value="1"/>
</dbReference>
<dbReference type="Gene3D" id="1.10.8.10">
    <property type="entry name" value="DNA helicase RuvA subunit, C-terminal domain"/>
    <property type="match status" value="2"/>
</dbReference>
<dbReference type="InterPro" id="IPR003892">
    <property type="entry name" value="CUE"/>
</dbReference>
<dbReference type="InterPro" id="IPR041809">
    <property type="entry name" value="CUE2_CUE1"/>
</dbReference>
<dbReference type="InterPro" id="IPR041810">
    <property type="entry name" value="CUE2_CUE2"/>
</dbReference>
<dbReference type="InterPro" id="IPR052772">
    <property type="entry name" value="Endo/PolyKinase_Domain-Protein"/>
</dbReference>
<dbReference type="InterPro" id="IPR002625">
    <property type="entry name" value="Smr_dom"/>
</dbReference>
<dbReference type="InterPro" id="IPR036063">
    <property type="entry name" value="Smr_dom_sf"/>
</dbReference>
<dbReference type="InterPro" id="IPR009060">
    <property type="entry name" value="UBA-like_sf"/>
</dbReference>
<dbReference type="PANTHER" id="PTHR46535">
    <property type="entry name" value="NEDD4-BINDING PROTEIN 2"/>
    <property type="match status" value="1"/>
</dbReference>
<dbReference type="PANTHER" id="PTHR46535:SF1">
    <property type="entry name" value="NEDD4-BINDING PROTEIN 2"/>
    <property type="match status" value="1"/>
</dbReference>
<dbReference type="Pfam" id="PF02845">
    <property type="entry name" value="CUE"/>
    <property type="match status" value="2"/>
</dbReference>
<dbReference type="SMART" id="SM00546">
    <property type="entry name" value="CUE"/>
    <property type="match status" value="2"/>
</dbReference>
<dbReference type="SMART" id="SM00463">
    <property type="entry name" value="SMR"/>
    <property type="match status" value="1"/>
</dbReference>
<dbReference type="SUPFAM" id="SSF160443">
    <property type="entry name" value="SMR domain-like"/>
    <property type="match status" value="1"/>
</dbReference>
<dbReference type="SUPFAM" id="SSF46934">
    <property type="entry name" value="UBA-like"/>
    <property type="match status" value="2"/>
</dbReference>
<dbReference type="PROSITE" id="PS51140">
    <property type="entry name" value="CUE"/>
    <property type="match status" value="2"/>
</dbReference>
<dbReference type="PROSITE" id="PS50828">
    <property type="entry name" value="SMR"/>
    <property type="match status" value="1"/>
</dbReference>
<reference key="1">
    <citation type="journal article" date="1994" name="Nature">
        <title>Complete DNA sequence of yeast chromosome XI.</title>
        <authorList>
            <person name="Dujon B."/>
            <person name="Alexandraki D."/>
            <person name="Andre B."/>
            <person name="Ansorge W."/>
            <person name="Baladron V."/>
            <person name="Ballesta J.P.G."/>
            <person name="Banrevi A."/>
            <person name="Bolle P.-A."/>
            <person name="Bolotin-Fukuhara M."/>
            <person name="Bossier P."/>
            <person name="Bou G."/>
            <person name="Boyer J."/>
            <person name="Buitrago M.J."/>
            <person name="Cheret G."/>
            <person name="Colleaux L."/>
            <person name="Daignan-Fornier B."/>
            <person name="del Rey F."/>
            <person name="Dion C."/>
            <person name="Domdey H."/>
            <person name="Duesterhoeft A."/>
            <person name="Duesterhus S."/>
            <person name="Entian K.-D."/>
            <person name="Erfle H."/>
            <person name="Esteban P.F."/>
            <person name="Feldmann H."/>
            <person name="Fernandes L."/>
            <person name="Fobo G.M."/>
            <person name="Fritz C."/>
            <person name="Fukuhara H."/>
            <person name="Gabel C."/>
            <person name="Gaillon L."/>
            <person name="Garcia-Cantalejo J.M."/>
            <person name="Garcia-Ramirez J.J."/>
            <person name="Gent M.E."/>
            <person name="Ghazvini M."/>
            <person name="Goffeau A."/>
            <person name="Gonzalez A."/>
            <person name="Grothues D."/>
            <person name="Guerreiro P."/>
            <person name="Hegemann J.H."/>
            <person name="Hewitt N."/>
            <person name="Hilger F."/>
            <person name="Hollenberg C.P."/>
            <person name="Horaitis O."/>
            <person name="Indge K.J."/>
            <person name="Jacquier A."/>
            <person name="James C.M."/>
            <person name="Jauniaux J.-C."/>
            <person name="Jimenez A."/>
            <person name="Keuchel H."/>
            <person name="Kirchrath L."/>
            <person name="Kleine K."/>
            <person name="Koetter P."/>
            <person name="Legrain P."/>
            <person name="Liebl S."/>
            <person name="Louis E.J."/>
            <person name="Maia e Silva A."/>
            <person name="Marck C."/>
            <person name="Monnier A.-L."/>
            <person name="Moestl D."/>
            <person name="Mueller S."/>
            <person name="Obermaier B."/>
            <person name="Oliver S.G."/>
            <person name="Pallier C."/>
            <person name="Pascolo S."/>
            <person name="Pfeiffer F."/>
            <person name="Philippsen P."/>
            <person name="Planta R.J."/>
            <person name="Pohl F.M."/>
            <person name="Pohl T.M."/>
            <person name="Poehlmann R."/>
            <person name="Portetelle D."/>
            <person name="Purnelle B."/>
            <person name="Puzos V."/>
            <person name="Ramezani Rad M."/>
            <person name="Rasmussen S.W."/>
            <person name="Remacha M.A."/>
            <person name="Revuelta J.L."/>
            <person name="Richard G.-F."/>
            <person name="Rieger M."/>
            <person name="Rodrigues-Pousada C."/>
            <person name="Rose M."/>
            <person name="Rupp T."/>
            <person name="Santos M.A."/>
            <person name="Schwager C."/>
            <person name="Sensen C."/>
            <person name="Skala J."/>
            <person name="Soares H."/>
            <person name="Sor F."/>
            <person name="Stegemann J."/>
            <person name="Tettelin H."/>
            <person name="Thierry A."/>
            <person name="Tzermia M."/>
            <person name="Urrestarazu L.A."/>
            <person name="van Dyck L."/>
            <person name="van Vliet-Reedijk J.C."/>
            <person name="Valens M."/>
            <person name="Vandenbol M."/>
            <person name="Vilela C."/>
            <person name="Vissers S."/>
            <person name="von Wettstein D."/>
            <person name="Voss H."/>
            <person name="Wiemann S."/>
            <person name="Xu G."/>
            <person name="Zimmermann J."/>
            <person name="Haasemann M."/>
            <person name="Becker I."/>
            <person name="Mewes H.-W."/>
        </authorList>
    </citation>
    <scope>NUCLEOTIDE SEQUENCE [LARGE SCALE GENOMIC DNA]</scope>
    <source>
        <strain>ATCC 204508 / S288c</strain>
    </source>
</reference>
<reference key="2">
    <citation type="journal article" date="2014" name="G3 (Bethesda)">
        <title>The reference genome sequence of Saccharomyces cerevisiae: Then and now.</title>
        <authorList>
            <person name="Engel S.R."/>
            <person name="Dietrich F.S."/>
            <person name="Fisk D.G."/>
            <person name="Binkley G."/>
            <person name="Balakrishnan R."/>
            <person name="Costanzo M.C."/>
            <person name="Dwight S.S."/>
            <person name="Hitz B.C."/>
            <person name="Karra K."/>
            <person name="Nash R.S."/>
            <person name="Weng S."/>
            <person name="Wong E.D."/>
            <person name="Lloyd P."/>
            <person name="Skrzypek M.S."/>
            <person name="Miyasato S.R."/>
            <person name="Simison M."/>
            <person name="Cherry J.M."/>
        </authorList>
    </citation>
    <scope>GENOME REANNOTATION</scope>
    <source>
        <strain>ATCC 204508 / S288c</strain>
    </source>
</reference>
<reference key="3">
    <citation type="journal article" date="2019" name="Elife">
        <title>The endonuclease Cue2 cleaves mRNAs at stalled ribosomes during No Go Decay.</title>
        <authorList>
            <person name="D'Orazio K.N."/>
            <person name="Wu C.C."/>
            <person name="Sinha N."/>
            <person name="Loll-Krippleber R."/>
            <person name="Brown G.W."/>
            <person name="Green R."/>
        </authorList>
    </citation>
    <scope>FUNCTION</scope>
    <scope>MUTAGENESIS OF 348-ASP--HIS-350 AND ARG-402</scope>
</reference>
<reference key="4">
    <citation type="journal article" date="2023" name="Nucleic Acids Res.">
        <title>Two modes of Cue2-mediated mRNA cleavage with distinct substrate recognition initiate no-go decay.</title>
        <authorList>
            <person name="Tomomatsu S."/>
            <person name="Watanabe A."/>
            <person name="Tesina P."/>
            <person name="Hashimoto S."/>
            <person name="Ikeuchi K."/>
            <person name="Li S."/>
            <person name="Matsuo Y."/>
            <person name="Beckmann R."/>
            <person name="Inada T."/>
        </authorList>
    </citation>
    <scope>FUNCTION</scope>
    <scope>DOMAIN</scope>
    <scope>MUTAGENESIS OF 20-PHE-PRO-21; 46-LEU-LEU-47; 67-PHE-PRO-68; 93-LEU-LEU-94 AND TRP-122</scope>
</reference>
<reference key="5">
    <citation type="journal article" date="2003" name="Cell">
        <title>Solution structure of a CUE-ubiquitin complex reveals a conserved mode of ubiquitin binding.</title>
        <authorList>
            <person name="Kang R.S."/>
            <person name="Daniels C.M."/>
            <person name="Francis S.A."/>
            <person name="Shih S.C."/>
            <person name="Salerno W.J."/>
            <person name="Hicke L."/>
            <person name="Radhakrishnan I."/>
        </authorList>
    </citation>
    <scope>STRUCTURE BY NMR OF 1-54 IN COMPLEX WITH UBIQUITIN</scope>
</reference>
<evidence type="ECO:0000255" key="1">
    <source>
        <dbReference type="PROSITE-ProRule" id="PRU00321"/>
    </source>
</evidence>
<evidence type="ECO:0000255" key="2">
    <source>
        <dbReference type="PROSITE-ProRule" id="PRU00468"/>
    </source>
</evidence>
<evidence type="ECO:0000269" key="3">
    <source>
    </source>
</evidence>
<evidence type="ECO:0000269" key="4">
    <source>
    </source>
</evidence>
<evidence type="ECO:0000303" key="5">
    <source>
    </source>
</evidence>
<evidence type="ECO:0000305" key="6"/>
<evidence type="ECO:0000312" key="7">
    <source>
        <dbReference type="SGD" id="S000001573"/>
    </source>
</evidence>
<evidence type="ECO:0007829" key="8">
    <source>
        <dbReference type="PDB" id="1OTR"/>
    </source>
</evidence>